<name>IHFA_LEGPL</name>
<gene>
    <name evidence="1" type="primary">ihfA</name>
    <name evidence="1" type="synonym">himA</name>
    <name type="ordered locus">lpl2637</name>
</gene>
<feature type="chain" id="PRO_0000277737" description="Integration host factor subunit alpha">
    <location>
        <begin position="1"/>
        <end position="97"/>
    </location>
</feature>
<feature type="region of interest" description="Disordered" evidence="2">
    <location>
        <begin position="50"/>
        <end position="71"/>
    </location>
</feature>
<dbReference type="EMBL" id="CR628337">
    <property type="protein sequence ID" value="CAH16878.1"/>
    <property type="molecule type" value="Genomic_DNA"/>
</dbReference>
<dbReference type="RefSeq" id="WP_011216576.1">
    <property type="nucleotide sequence ID" value="NC_006369.1"/>
</dbReference>
<dbReference type="SMR" id="Q5WT88"/>
<dbReference type="GeneID" id="57036710"/>
<dbReference type="KEGG" id="lpf:lpl2637"/>
<dbReference type="LegioList" id="lpl2637"/>
<dbReference type="HOGENOM" id="CLU_105066_1_3_6"/>
<dbReference type="Proteomes" id="UP000002517">
    <property type="component" value="Chromosome"/>
</dbReference>
<dbReference type="GO" id="GO:0005829">
    <property type="term" value="C:cytosol"/>
    <property type="evidence" value="ECO:0007669"/>
    <property type="project" value="TreeGrafter"/>
</dbReference>
<dbReference type="GO" id="GO:0003677">
    <property type="term" value="F:DNA binding"/>
    <property type="evidence" value="ECO:0007669"/>
    <property type="project" value="UniProtKB-UniRule"/>
</dbReference>
<dbReference type="GO" id="GO:0030527">
    <property type="term" value="F:structural constituent of chromatin"/>
    <property type="evidence" value="ECO:0007669"/>
    <property type="project" value="InterPro"/>
</dbReference>
<dbReference type="GO" id="GO:0006310">
    <property type="term" value="P:DNA recombination"/>
    <property type="evidence" value="ECO:0007669"/>
    <property type="project" value="UniProtKB-UniRule"/>
</dbReference>
<dbReference type="GO" id="GO:0009893">
    <property type="term" value="P:positive regulation of metabolic process"/>
    <property type="evidence" value="ECO:0007669"/>
    <property type="project" value="UniProtKB-ARBA"/>
</dbReference>
<dbReference type="GO" id="GO:0006355">
    <property type="term" value="P:regulation of DNA-templated transcription"/>
    <property type="evidence" value="ECO:0007669"/>
    <property type="project" value="UniProtKB-UniRule"/>
</dbReference>
<dbReference type="GO" id="GO:0006417">
    <property type="term" value="P:regulation of translation"/>
    <property type="evidence" value="ECO:0007669"/>
    <property type="project" value="UniProtKB-UniRule"/>
</dbReference>
<dbReference type="CDD" id="cd13835">
    <property type="entry name" value="IHF_A"/>
    <property type="match status" value="1"/>
</dbReference>
<dbReference type="FunFam" id="4.10.520.10:FF:000002">
    <property type="entry name" value="Integration host factor subunit alpha"/>
    <property type="match status" value="1"/>
</dbReference>
<dbReference type="Gene3D" id="4.10.520.10">
    <property type="entry name" value="IHF-like DNA-binding proteins"/>
    <property type="match status" value="1"/>
</dbReference>
<dbReference type="HAMAP" id="MF_00380">
    <property type="entry name" value="IHF_alpha"/>
    <property type="match status" value="1"/>
</dbReference>
<dbReference type="InterPro" id="IPR000119">
    <property type="entry name" value="Hist_DNA-bd"/>
</dbReference>
<dbReference type="InterPro" id="IPR020816">
    <property type="entry name" value="Histone-like_DNA-bd_CS"/>
</dbReference>
<dbReference type="InterPro" id="IPR010992">
    <property type="entry name" value="IHF-like_DNA-bd_dom_sf"/>
</dbReference>
<dbReference type="InterPro" id="IPR005684">
    <property type="entry name" value="IHF_alpha"/>
</dbReference>
<dbReference type="NCBIfam" id="TIGR00987">
    <property type="entry name" value="himA"/>
    <property type="match status" value="1"/>
</dbReference>
<dbReference type="NCBIfam" id="NF001401">
    <property type="entry name" value="PRK00285.1"/>
    <property type="match status" value="1"/>
</dbReference>
<dbReference type="PANTHER" id="PTHR33175">
    <property type="entry name" value="DNA-BINDING PROTEIN HU"/>
    <property type="match status" value="1"/>
</dbReference>
<dbReference type="PANTHER" id="PTHR33175:SF2">
    <property type="entry name" value="INTEGRATION HOST FACTOR SUBUNIT ALPHA"/>
    <property type="match status" value="1"/>
</dbReference>
<dbReference type="Pfam" id="PF00216">
    <property type="entry name" value="Bac_DNA_binding"/>
    <property type="match status" value="1"/>
</dbReference>
<dbReference type="PRINTS" id="PR01727">
    <property type="entry name" value="DNABINDINGHU"/>
</dbReference>
<dbReference type="SMART" id="SM00411">
    <property type="entry name" value="BHL"/>
    <property type="match status" value="1"/>
</dbReference>
<dbReference type="SUPFAM" id="SSF47729">
    <property type="entry name" value="IHF-like DNA-binding proteins"/>
    <property type="match status" value="1"/>
</dbReference>
<dbReference type="PROSITE" id="PS00045">
    <property type="entry name" value="HISTONE_LIKE"/>
    <property type="match status" value="1"/>
</dbReference>
<accession>Q5WT88</accession>
<protein>
    <recommendedName>
        <fullName evidence="1">Integration host factor subunit alpha</fullName>
        <shortName evidence="1">IHF-alpha</shortName>
    </recommendedName>
</protein>
<organism>
    <name type="scientific">Legionella pneumophila (strain Lens)</name>
    <dbReference type="NCBI Taxonomy" id="297245"/>
    <lineage>
        <taxon>Bacteria</taxon>
        <taxon>Pseudomonadati</taxon>
        <taxon>Pseudomonadota</taxon>
        <taxon>Gammaproteobacteria</taxon>
        <taxon>Legionellales</taxon>
        <taxon>Legionellaceae</taxon>
        <taxon>Legionella</taxon>
    </lineage>
</organism>
<reference key="1">
    <citation type="journal article" date="2004" name="Nat. Genet.">
        <title>Evidence in the Legionella pneumophila genome for exploitation of host cell functions and high genome plasticity.</title>
        <authorList>
            <person name="Cazalet C."/>
            <person name="Rusniok C."/>
            <person name="Brueggemann H."/>
            <person name="Zidane N."/>
            <person name="Magnier A."/>
            <person name="Ma L."/>
            <person name="Tichit M."/>
            <person name="Jarraud S."/>
            <person name="Bouchier C."/>
            <person name="Vandenesch F."/>
            <person name="Kunst F."/>
            <person name="Etienne J."/>
            <person name="Glaser P."/>
            <person name="Buchrieser C."/>
        </authorList>
    </citation>
    <scope>NUCLEOTIDE SEQUENCE [LARGE SCALE GENOMIC DNA]</scope>
    <source>
        <strain>Lens</strain>
    </source>
</reference>
<evidence type="ECO:0000255" key="1">
    <source>
        <dbReference type="HAMAP-Rule" id="MF_00380"/>
    </source>
</evidence>
<evidence type="ECO:0000256" key="2">
    <source>
        <dbReference type="SAM" id="MobiDB-lite"/>
    </source>
</evidence>
<comment type="function">
    <text evidence="1">This protein is one of the two subunits of integration host factor, a specific DNA-binding protein that functions in genetic recombination as well as in transcriptional and translational control.</text>
</comment>
<comment type="subunit">
    <text evidence="1">Heterodimer of an alpha and a beta chain.</text>
</comment>
<comment type="similarity">
    <text evidence="1">Belongs to the bacterial histone-like protein family.</text>
</comment>
<proteinExistence type="inferred from homology"/>
<sequence length="97" mass="10987">MNALSKAIMAETLCDELKLNKPVAKEMVENFFEELRHALENGQHVKLSGFGNFTLRDKPQRPGRNPKTGEEIPVEARRVVTFKPGLKLKTKIEKIGK</sequence>
<keyword id="KW-0233">DNA recombination</keyword>
<keyword id="KW-0238">DNA-binding</keyword>
<keyword id="KW-0804">Transcription</keyword>
<keyword id="KW-0805">Transcription regulation</keyword>
<keyword id="KW-0810">Translation regulation</keyword>